<reference key="1">
    <citation type="journal article" date="2006" name="DNA Res.">
        <title>Genome sequence of the cat pathogen, Chlamydophila felis.</title>
        <authorList>
            <person name="Azuma Y."/>
            <person name="Hirakawa H."/>
            <person name="Yamashita A."/>
            <person name="Cai Y."/>
            <person name="Rahman M.A."/>
            <person name="Suzuki H."/>
            <person name="Mitaku S."/>
            <person name="Toh H."/>
            <person name="Goto S."/>
            <person name="Murakami T."/>
            <person name="Sugi K."/>
            <person name="Hayashi H."/>
            <person name="Fukushi H."/>
            <person name="Hattori M."/>
            <person name="Kuhara S."/>
            <person name="Shirai M."/>
        </authorList>
    </citation>
    <scope>NUCLEOTIDE SEQUENCE [LARGE SCALE GENOMIC DNA]</scope>
    <source>
        <strain>Fe/C-56</strain>
    </source>
</reference>
<accession>Q253U4</accession>
<protein>
    <recommendedName>
        <fullName evidence="1">Nucleoid-associated protein CF0672</fullName>
    </recommendedName>
</protein>
<keyword id="KW-0963">Cytoplasm</keyword>
<keyword id="KW-0238">DNA-binding</keyword>
<organism>
    <name type="scientific">Chlamydia felis (strain Fe/C-56)</name>
    <name type="common">Chlamydophila felis</name>
    <dbReference type="NCBI Taxonomy" id="264202"/>
    <lineage>
        <taxon>Bacteria</taxon>
        <taxon>Pseudomonadati</taxon>
        <taxon>Chlamydiota</taxon>
        <taxon>Chlamydiia</taxon>
        <taxon>Chlamydiales</taxon>
        <taxon>Chlamydiaceae</taxon>
        <taxon>Chlamydia/Chlamydophila group</taxon>
        <taxon>Chlamydia</taxon>
    </lineage>
</organism>
<comment type="function">
    <text evidence="1">Binds to DNA and alters its conformation. May be involved in regulation of gene expression, nucleoid organization and DNA protection.</text>
</comment>
<comment type="subunit">
    <text evidence="1">Homodimer.</text>
</comment>
<comment type="subcellular location">
    <subcellularLocation>
        <location evidence="1">Cytoplasm</location>
        <location evidence="1">Nucleoid</location>
    </subcellularLocation>
</comment>
<comment type="similarity">
    <text evidence="1">Belongs to the YbaB/EbfC family.</text>
</comment>
<sequence>MGSGYAKKKKEAKIMEQQFLEMEASLEKKRYEGQAGNGLVSVVINGKCDIVSVKVQPTCLDPEEPEVIEDLFRSAFKEAKTAMDQEMSVMRAGLPF</sequence>
<feature type="chain" id="PRO_1000003721" description="Nucleoid-associated protein CF0672">
    <location>
        <begin position="1"/>
        <end position="96"/>
    </location>
</feature>
<dbReference type="EMBL" id="AP006861">
    <property type="protein sequence ID" value="BAE81444.1"/>
    <property type="molecule type" value="Genomic_DNA"/>
</dbReference>
<dbReference type="RefSeq" id="WP_011458223.1">
    <property type="nucleotide sequence ID" value="NC_007899.1"/>
</dbReference>
<dbReference type="SMR" id="Q253U4"/>
<dbReference type="STRING" id="264202.CF0672"/>
<dbReference type="KEGG" id="cfe:CF0672"/>
<dbReference type="eggNOG" id="COG0718">
    <property type="taxonomic scope" value="Bacteria"/>
</dbReference>
<dbReference type="HOGENOM" id="CLU_140930_2_2_0"/>
<dbReference type="OrthoDB" id="19046at2"/>
<dbReference type="Proteomes" id="UP000001260">
    <property type="component" value="Chromosome"/>
</dbReference>
<dbReference type="GO" id="GO:0043590">
    <property type="term" value="C:bacterial nucleoid"/>
    <property type="evidence" value="ECO:0007669"/>
    <property type="project" value="UniProtKB-UniRule"/>
</dbReference>
<dbReference type="GO" id="GO:0005829">
    <property type="term" value="C:cytosol"/>
    <property type="evidence" value="ECO:0007669"/>
    <property type="project" value="TreeGrafter"/>
</dbReference>
<dbReference type="GO" id="GO:0003677">
    <property type="term" value="F:DNA binding"/>
    <property type="evidence" value="ECO:0007669"/>
    <property type="project" value="UniProtKB-UniRule"/>
</dbReference>
<dbReference type="Gene3D" id="3.30.1310.10">
    <property type="entry name" value="Nucleoid-associated protein YbaB-like domain"/>
    <property type="match status" value="1"/>
</dbReference>
<dbReference type="HAMAP" id="MF_00274">
    <property type="entry name" value="DNA_YbaB_EbfC"/>
    <property type="match status" value="1"/>
</dbReference>
<dbReference type="InterPro" id="IPR036894">
    <property type="entry name" value="YbaB-like_sf"/>
</dbReference>
<dbReference type="InterPro" id="IPR004401">
    <property type="entry name" value="YbaB/EbfC"/>
</dbReference>
<dbReference type="NCBIfam" id="TIGR00103">
    <property type="entry name" value="DNA_YbaB_EbfC"/>
    <property type="match status" value="1"/>
</dbReference>
<dbReference type="PANTHER" id="PTHR33449">
    <property type="entry name" value="NUCLEOID-ASSOCIATED PROTEIN YBAB"/>
    <property type="match status" value="1"/>
</dbReference>
<dbReference type="PANTHER" id="PTHR33449:SF1">
    <property type="entry name" value="NUCLEOID-ASSOCIATED PROTEIN YBAB"/>
    <property type="match status" value="1"/>
</dbReference>
<dbReference type="Pfam" id="PF02575">
    <property type="entry name" value="YbaB_DNA_bd"/>
    <property type="match status" value="1"/>
</dbReference>
<dbReference type="PIRSF" id="PIRSF004555">
    <property type="entry name" value="UCP004555"/>
    <property type="match status" value="1"/>
</dbReference>
<dbReference type="SUPFAM" id="SSF82607">
    <property type="entry name" value="YbaB-like"/>
    <property type="match status" value="1"/>
</dbReference>
<proteinExistence type="inferred from homology"/>
<name>Y672_CHLFF</name>
<evidence type="ECO:0000255" key="1">
    <source>
        <dbReference type="HAMAP-Rule" id="MF_00274"/>
    </source>
</evidence>
<gene>
    <name type="ordered locus">CF0672</name>
</gene>